<sequence>MTLSPEDIKIIEKYALQNAVKYGKAPQPKAVMGKVMGECPQLRADPSGVSAALENIVSEIAKGNPEAWEARLSEIAPELIEALSVKKEPDKGLKPLEGAETGKVVMRFAPNPNGPATLGSSRGMVVNSEYVKVYKGKFILRFDDTDPDIKRPMLEAYDWYMDDFKWLGVVPDQVVRASDRFPIYYDYARKLIEMGKAYVCFCKGEDFKRLKDSKKACPHRDTDPEENLMHWEKMLAGEYEDQQAVLRIKTDIEHKDPALRDWGAFRIRKMSHPRPEIGNKYIVWPLLDFAGAIEDHELGMTHIIRGKDLIDSEKRQTYIYKYFGWTYPKTTHWGRVKIHEFGKFSTSTLRKAIESGEYSGWDDPRLPTIRAIRRRGIRAEALKKFMIEMGVGMTDVSISMESLYAENRKIVDPVANRYFFVWNPVELEIEGMKPVVAKVPRHPTDHARGMREISIENKVLVCAEDIEKLNVGSVLRLKDLCNVEITSLSPLRVKRSETSLEDLKKAKGKIIHWVPVDGIPVKVCGPEGDIEGTGERGIETELDNIVQFERFGFCRIDAVDGENVVAYFAHK</sequence>
<feature type="chain" id="PRO_0000119719" description="Glutamate--tRNA ligase">
    <location>
        <begin position="1"/>
        <end position="571"/>
    </location>
</feature>
<feature type="short sequence motif" description="'HIGH' region" evidence="1">
    <location>
        <begin position="110"/>
        <end position="120"/>
    </location>
</feature>
<keyword id="KW-0030">Aminoacyl-tRNA synthetase</keyword>
<keyword id="KW-0067">ATP-binding</keyword>
<keyword id="KW-0963">Cytoplasm</keyword>
<keyword id="KW-0436">Ligase</keyword>
<keyword id="KW-0547">Nucleotide-binding</keyword>
<keyword id="KW-0648">Protein biosynthesis</keyword>
<proteinExistence type="inferred from homology"/>
<dbReference type="EC" id="6.1.1.17" evidence="1"/>
<dbReference type="EMBL" id="AE008384">
    <property type="protein sequence ID" value="AAM31445.1"/>
    <property type="molecule type" value="Genomic_DNA"/>
</dbReference>
<dbReference type="RefSeq" id="WP_011033689.1">
    <property type="nucleotide sequence ID" value="NC_003901.1"/>
</dbReference>
<dbReference type="SMR" id="Q8PW52"/>
<dbReference type="KEGG" id="mma:MM_1749"/>
<dbReference type="PATRIC" id="fig|192952.21.peg.2025"/>
<dbReference type="eggNOG" id="arCOG04302">
    <property type="taxonomic scope" value="Archaea"/>
</dbReference>
<dbReference type="HOGENOM" id="CLU_001882_1_3_2"/>
<dbReference type="Proteomes" id="UP000000595">
    <property type="component" value="Chromosome"/>
</dbReference>
<dbReference type="GO" id="GO:0005829">
    <property type="term" value="C:cytosol"/>
    <property type="evidence" value="ECO:0007669"/>
    <property type="project" value="TreeGrafter"/>
</dbReference>
<dbReference type="GO" id="GO:0005524">
    <property type="term" value="F:ATP binding"/>
    <property type="evidence" value="ECO:0007669"/>
    <property type="project" value="UniProtKB-UniRule"/>
</dbReference>
<dbReference type="GO" id="GO:0004818">
    <property type="term" value="F:glutamate-tRNA ligase activity"/>
    <property type="evidence" value="ECO:0007669"/>
    <property type="project" value="UniProtKB-UniRule"/>
</dbReference>
<dbReference type="GO" id="GO:0043604">
    <property type="term" value="P:amide biosynthetic process"/>
    <property type="evidence" value="ECO:0007669"/>
    <property type="project" value="TreeGrafter"/>
</dbReference>
<dbReference type="GO" id="GO:0006424">
    <property type="term" value="P:glutamyl-tRNA aminoacylation"/>
    <property type="evidence" value="ECO:0007669"/>
    <property type="project" value="UniProtKB-UniRule"/>
</dbReference>
<dbReference type="CDD" id="cd09287">
    <property type="entry name" value="GluRS_non_core"/>
    <property type="match status" value="1"/>
</dbReference>
<dbReference type="FunFam" id="3.40.50.620:FF:000222">
    <property type="entry name" value="Glutamate--tRNA ligase"/>
    <property type="match status" value="1"/>
</dbReference>
<dbReference type="Gene3D" id="2.40.240.100">
    <property type="match status" value="1"/>
</dbReference>
<dbReference type="Gene3D" id="3.40.50.620">
    <property type="entry name" value="HUPs"/>
    <property type="match status" value="1"/>
</dbReference>
<dbReference type="Gene3D" id="2.40.240.10">
    <property type="entry name" value="Ribosomal Protein L25, Chain P"/>
    <property type="match status" value="1"/>
</dbReference>
<dbReference type="HAMAP" id="MF_02076">
    <property type="entry name" value="Glu_tRNA_synth_type2"/>
    <property type="match status" value="1"/>
</dbReference>
<dbReference type="InterPro" id="IPR050132">
    <property type="entry name" value="Gln/Glu-tRNA_Ligase"/>
</dbReference>
<dbReference type="InterPro" id="IPR004526">
    <property type="entry name" value="Glu-tRNA-synth_arc/euk"/>
</dbReference>
<dbReference type="InterPro" id="IPR000924">
    <property type="entry name" value="Glu/Gln-tRNA-synth"/>
</dbReference>
<dbReference type="InterPro" id="IPR020058">
    <property type="entry name" value="Glu/Gln-tRNA-synth_Ib_cat-dom"/>
</dbReference>
<dbReference type="InterPro" id="IPR020059">
    <property type="entry name" value="Glu/Gln-tRNA-synth_Ib_codon-bd"/>
</dbReference>
<dbReference type="InterPro" id="IPR020056">
    <property type="entry name" value="Rbsml_bL25/Gln-tRNA_synth_N"/>
</dbReference>
<dbReference type="InterPro" id="IPR011035">
    <property type="entry name" value="Ribosomal_bL25/Gln-tRNA_synth"/>
</dbReference>
<dbReference type="InterPro" id="IPR014729">
    <property type="entry name" value="Rossmann-like_a/b/a_fold"/>
</dbReference>
<dbReference type="InterPro" id="IPR049437">
    <property type="entry name" value="tRNA-synt_1c_C2"/>
</dbReference>
<dbReference type="NCBIfam" id="TIGR00463">
    <property type="entry name" value="gltX_arch"/>
    <property type="match status" value="1"/>
</dbReference>
<dbReference type="NCBIfam" id="NF003169">
    <property type="entry name" value="PRK04156.1"/>
    <property type="match status" value="1"/>
</dbReference>
<dbReference type="PANTHER" id="PTHR43097:SF5">
    <property type="entry name" value="GLUTAMATE--TRNA LIGASE"/>
    <property type="match status" value="1"/>
</dbReference>
<dbReference type="PANTHER" id="PTHR43097">
    <property type="entry name" value="GLUTAMINE-TRNA LIGASE"/>
    <property type="match status" value="1"/>
</dbReference>
<dbReference type="Pfam" id="PF00749">
    <property type="entry name" value="tRNA-synt_1c"/>
    <property type="match status" value="1"/>
</dbReference>
<dbReference type="Pfam" id="PF03950">
    <property type="entry name" value="tRNA-synt_1c_C"/>
    <property type="match status" value="1"/>
</dbReference>
<dbReference type="Pfam" id="PF20974">
    <property type="entry name" value="tRNA-synt_1c_C2"/>
    <property type="match status" value="1"/>
</dbReference>
<dbReference type="PRINTS" id="PR00987">
    <property type="entry name" value="TRNASYNTHGLU"/>
</dbReference>
<dbReference type="SUPFAM" id="SSF52374">
    <property type="entry name" value="Nucleotidylyl transferase"/>
    <property type="match status" value="1"/>
</dbReference>
<dbReference type="SUPFAM" id="SSF50715">
    <property type="entry name" value="Ribosomal protein L25-like"/>
    <property type="match status" value="1"/>
</dbReference>
<evidence type="ECO:0000255" key="1">
    <source>
        <dbReference type="HAMAP-Rule" id="MF_02076"/>
    </source>
</evidence>
<name>SYE_METMA</name>
<organism>
    <name type="scientific">Methanosarcina mazei (strain ATCC BAA-159 / DSM 3647 / Goe1 / Go1 / JCM 11833 / OCM 88)</name>
    <name type="common">Methanosarcina frisia</name>
    <dbReference type="NCBI Taxonomy" id="192952"/>
    <lineage>
        <taxon>Archaea</taxon>
        <taxon>Methanobacteriati</taxon>
        <taxon>Methanobacteriota</taxon>
        <taxon>Stenosarchaea group</taxon>
        <taxon>Methanomicrobia</taxon>
        <taxon>Methanosarcinales</taxon>
        <taxon>Methanosarcinaceae</taxon>
        <taxon>Methanosarcina</taxon>
    </lineage>
</organism>
<comment type="function">
    <text evidence="1">Catalyzes the attachment of glutamate to tRNA(Glu) in a two-step reaction: glutamate is first activated by ATP to form Glu-AMP and then transferred to the acceptor end of tRNA(Glu).</text>
</comment>
<comment type="catalytic activity">
    <reaction evidence="1">
        <text>tRNA(Glu) + L-glutamate + ATP = L-glutamyl-tRNA(Glu) + AMP + diphosphate</text>
        <dbReference type="Rhea" id="RHEA:23540"/>
        <dbReference type="Rhea" id="RHEA-COMP:9663"/>
        <dbReference type="Rhea" id="RHEA-COMP:9680"/>
        <dbReference type="ChEBI" id="CHEBI:29985"/>
        <dbReference type="ChEBI" id="CHEBI:30616"/>
        <dbReference type="ChEBI" id="CHEBI:33019"/>
        <dbReference type="ChEBI" id="CHEBI:78442"/>
        <dbReference type="ChEBI" id="CHEBI:78520"/>
        <dbReference type="ChEBI" id="CHEBI:456215"/>
        <dbReference type="EC" id="6.1.1.17"/>
    </reaction>
</comment>
<comment type="subcellular location">
    <subcellularLocation>
        <location evidence="1">Cytoplasm</location>
    </subcellularLocation>
</comment>
<comment type="similarity">
    <text evidence="1">Belongs to the class-I aminoacyl-tRNA synthetase family. Glutamate--tRNA ligase type 2 subfamily.</text>
</comment>
<protein>
    <recommendedName>
        <fullName evidence="1">Glutamate--tRNA ligase</fullName>
        <ecNumber evidence="1">6.1.1.17</ecNumber>
    </recommendedName>
    <alternativeName>
        <fullName evidence="1">Glutamyl-tRNA synthetase</fullName>
        <shortName evidence="1">GluRS</shortName>
    </alternativeName>
</protein>
<accession>Q8PW52</accession>
<reference key="1">
    <citation type="journal article" date="2002" name="J. Mol. Microbiol. Biotechnol.">
        <title>The genome of Methanosarcina mazei: evidence for lateral gene transfer between Bacteria and Archaea.</title>
        <authorList>
            <person name="Deppenmeier U."/>
            <person name="Johann A."/>
            <person name="Hartsch T."/>
            <person name="Merkl R."/>
            <person name="Schmitz R.A."/>
            <person name="Martinez-Arias R."/>
            <person name="Henne A."/>
            <person name="Wiezer A."/>
            <person name="Baeumer S."/>
            <person name="Jacobi C."/>
            <person name="Brueggemann H."/>
            <person name="Lienard T."/>
            <person name="Christmann A."/>
            <person name="Boemecke M."/>
            <person name="Steckel S."/>
            <person name="Bhattacharyya A."/>
            <person name="Lykidis A."/>
            <person name="Overbeek R."/>
            <person name="Klenk H.-P."/>
            <person name="Gunsalus R.P."/>
            <person name="Fritz H.-J."/>
            <person name="Gottschalk G."/>
        </authorList>
    </citation>
    <scope>NUCLEOTIDE SEQUENCE [LARGE SCALE GENOMIC DNA]</scope>
    <source>
        <strain>ATCC BAA-159 / DSM 3647 / Goe1 / Go1 / JCM 11833 / OCM 88</strain>
    </source>
</reference>
<gene>
    <name evidence="1" type="primary">gltX</name>
    <name type="ordered locus">MM_1749</name>
</gene>